<protein>
    <recommendedName>
        <fullName>Vasculin-like protein 1</fullName>
    </recommendedName>
    <alternativeName>
        <fullName>GC-rich promoter-binding protein 1-like 1</fullName>
    </alternativeName>
</protein>
<sequence length="474" mass="52302">MAQHDFVPAWLNFSTPQSAKSPTATFEKHGEHLPRGEGRFGVSRRRHNSSDGFFNNGPLRTAGDSWHQPSLFRHDSVDSGVSKGAYAGITGNPSGWHSSSRGHDGMSQRSGGGTGNHRHWNGSFHSRKGCAFQEKPPMEIREEKKEDKVEKLQFEEEDFPSLNPEAGKQHQPCRPIGTPSGVWENPPSAKQPSKMLVIKKVSKEDPAAAFSAAFTSPGSHHANGNKLSSVVPSVYKNLVPKPVPPPSKPNAWKANRMEHKSGSLSSSRESAFTSPISVTKPVVLASGAALSSPKESPSSTTPPIEISSSRLTKLTRRTTDRKSEFLKTLKDDRNGDFSENRDCDKLEDLEDNSTPEPKENGEEGCHQNGLALPVVEEGEVLSHSLEAEHRLLKAMGWQEYPENDENCLPLTEDELKEFHMKTEQLRRNGFGKNGFLQSRSSSLFSPWRSTCKAEFEDSDTETSSSETSDDDAWK</sequence>
<proteinExistence type="evidence at transcript level"/>
<reference key="1">
    <citation type="submission" date="2004-11" db="EMBL/GenBank/DDBJ databases">
        <authorList>
            <consortium name="The German cDNA consortium"/>
        </authorList>
    </citation>
    <scope>NUCLEOTIDE SEQUENCE [LARGE SCALE MRNA]</scope>
    <source>
        <tissue>Brain cortex</tissue>
    </source>
</reference>
<comment type="function">
    <text evidence="4">Possible transcription factor.</text>
</comment>
<comment type="subcellular location">
    <subcellularLocation>
        <location evidence="4">Nucleus</location>
    </subcellularLocation>
</comment>
<comment type="similarity">
    <text evidence="4">Belongs to the vasculin family.</text>
</comment>
<feature type="chain" id="PRO_0000324117" description="Vasculin-like protein 1">
    <location>
        <begin position="1"/>
        <end position="474"/>
    </location>
</feature>
<feature type="region of interest" description="Disordered" evidence="3">
    <location>
        <begin position="17"/>
        <end position="42"/>
    </location>
</feature>
<feature type="region of interest" description="Disordered" evidence="3">
    <location>
        <begin position="91"/>
        <end position="191"/>
    </location>
</feature>
<feature type="region of interest" description="Disordered" evidence="3">
    <location>
        <begin position="238"/>
        <end position="371"/>
    </location>
</feature>
<feature type="region of interest" description="Disordered" evidence="3">
    <location>
        <begin position="453"/>
        <end position="474"/>
    </location>
</feature>
<feature type="compositionally biased region" description="Basic and acidic residues" evidence="3">
    <location>
        <begin position="26"/>
        <end position="38"/>
    </location>
</feature>
<feature type="compositionally biased region" description="Basic residues" evidence="3">
    <location>
        <begin position="116"/>
        <end position="128"/>
    </location>
</feature>
<feature type="compositionally biased region" description="Basic and acidic residues" evidence="3">
    <location>
        <begin position="136"/>
        <end position="154"/>
    </location>
</feature>
<feature type="compositionally biased region" description="Polar residues" evidence="3">
    <location>
        <begin position="262"/>
        <end position="277"/>
    </location>
</feature>
<feature type="compositionally biased region" description="Low complexity" evidence="3">
    <location>
        <begin position="291"/>
        <end position="312"/>
    </location>
</feature>
<feature type="compositionally biased region" description="Basic and acidic residues" evidence="3">
    <location>
        <begin position="317"/>
        <end position="346"/>
    </location>
</feature>
<feature type="compositionally biased region" description="Basic and acidic residues" evidence="3">
    <location>
        <begin position="356"/>
        <end position="365"/>
    </location>
</feature>
<feature type="modified residue" description="Phosphoserine" evidence="2">
    <location>
        <position position="49"/>
    </location>
</feature>
<feature type="modified residue" description="Phosphoserine" evidence="2">
    <location>
        <position position="76"/>
    </location>
</feature>
<feature type="modified residue" description="Phosphoserine" evidence="2">
    <location>
        <position position="202"/>
    </location>
</feature>
<feature type="modified residue" description="Phosphoserine" evidence="1">
    <location>
        <position position="292"/>
    </location>
</feature>
<feature type="modified residue" description="Phosphothreonine" evidence="2">
    <location>
        <position position="301"/>
    </location>
</feature>
<feature type="modified residue" description="Phosphoserine" evidence="2">
    <location>
        <position position="382"/>
    </location>
</feature>
<organism>
    <name type="scientific">Pongo abelii</name>
    <name type="common">Sumatran orangutan</name>
    <name type="synonym">Pongo pygmaeus abelii</name>
    <dbReference type="NCBI Taxonomy" id="9601"/>
    <lineage>
        <taxon>Eukaryota</taxon>
        <taxon>Metazoa</taxon>
        <taxon>Chordata</taxon>
        <taxon>Craniata</taxon>
        <taxon>Vertebrata</taxon>
        <taxon>Euteleostomi</taxon>
        <taxon>Mammalia</taxon>
        <taxon>Eutheria</taxon>
        <taxon>Euarchontoglires</taxon>
        <taxon>Primates</taxon>
        <taxon>Haplorrhini</taxon>
        <taxon>Catarrhini</taxon>
        <taxon>Hominidae</taxon>
        <taxon>Pongo</taxon>
    </lineage>
</organism>
<evidence type="ECO:0000250" key="1">
    <source>
        <dbReference type="UniProtKB" id="Q6NZP2"/>
    </source>
</evidence>
<evidence type="ECO:0000250" key="2">
    <source>
        <dbReference type="UniProtKB" id="Q9HC44"/>
    </source>
</evidence>
<evidence type="ECO:0000256" key="3">
    <source>
        <dbReference type="SAM" id="MobiDB-lite"/>
    </source>
</evidence>
<evidence type="ECO:0000305" key="4"/>
<accession>Q5R9C3</accession>
<dbReference type="EMBL" id="CR859466">
    <property type="protein sequence ID" value="CAH91637.1"/>
    <property type="molecule type" value="mRNA"/>
</dbReference>
<dbReference type="RefSeq" id="NP_001125962.1">
    <property type="nucleotide sequence ID" value="NM_001132490.1"/>
</dbReference>
<dbReference type="RefSeq" id="XP_024112250.1">
    <property type="nucleotide sequence ID" value="XM_024256482.3"/>
</dbReference>
<dbReference type="FunCoup" id="Q5R9C3">
    <property type="interactions" value="2307"/>
</dbReference>
<dbReference type="Ensembl" id="ENSPPYT00000001687.2">
    <property type="protein sequence ID" value="ENSPPYP00000001632.2"/>
    <property type="gene ID" value="ENSPPYG00000001407.3"/>
</dbReference>
<dbReference type="GeneID" id="100172897"/>
<dbReference type="KEGG" id="pon:100172897"/>
<dbReference type="CTD" id="60313"/>
<dbReference type="eggNOG" id="ENOG502QPN2">
    <property type="taxonomic scope" value="Eukaryota"/>
</dbReference>
<dbReference type="GeneTree" id="ENSGT00420000029753"/>
<dbReference type="InParanoid" id="Q5R9C3"/>
<dbReference type="OMA" id="AGRQNNQ"/>
<dbReference type="OrthoDB" id="289416at2759"/>
<dbReference type="Proteomes" id="UP000001595">
    <property type="component" value="Chromosome 1"/>
</dbReference>
<dbReference type="GO" id="GO:0005634">
    <property type="term" value="C:nucleus"/>
    <property type="evidence" value="ECO:0007669"/>
    <property type="project" value="UniProtKB-SubCell"/>
</dbReference>
<dbReference type="GO" id="GO:0003677">
    <property type="term" value="F:DNA binding"/>
    <property type="evidence" value="ECO:0007669"/>
    <property type="project" value="UniProtKB-KW"/>
</dbReference>
<dbReference type="GO" id="GO:0003723">
    <property type="term" value="F:RNA binding"/>
    <property type="evidence" value="ECO:0007669"/>
    <property type="project" value="InterPro"/>
</dbReference>
<dbReference type="GO" id="GO:0006351">
    <property type="term" value="P:DNA-templated transcription"/>
    <property type="evidence" value="ECO:0007669"/>
    <property type="project" value="InterPro"/>
</dbReference>
<dbReference type="GO" id="GO:0045893">
    <property type="term" value="P:positive regulation of DNA-templated transcription"/>
    <property type="evidence" value="ECO:0007669"/>
    <property type="project" value="InterPro"/>
</dbReference>
<dbReference type="InterPro" id="IPR028128">
    <property type="entry name" value="Vasculin_fam"/>
</dbReference>
<dbReference type="PANTHER" id="PTHR14339">
    <property type="entry name" value="VASCULIN"/>
    <property type="match status" value="1"/>
</dbReference>
<dbReference type="PANTHER" id="PTHR14339:SF10">
    <property type="entry name" value="VASCULIN-LIKE PROTEIN 1"/>
    <property type="match status" value="1"/>
</dbReference>
<dbReference type="Pfam" id="PF15337">
    <property type="entry name" value="Vasculin"/>
    <property type="match status" value="1"/>
</dbReference>
<name>GPBL1_PONAB</name>
<keyword id="KW-0238">DNA-binding</keyword>
<keyword id="KW-0539">Nucleus</keyword>
<keyword id="KW-0597">Phosphoprotein</keyword>
<keyword id="KW-1185">Reference proteome</keyword>
<keyword id="KW-0804">Transcription</keyword>
<keyword id="KW-0805">Transcription regulation</keyword>
<gene>
    <name type="primary">GPBP1L1</name>
</gene>